<sequence>MHHRMNEMNLSPVGMEQLTSSSVSNALPVSGSHLGLAASPTHSAIPAPGLPVAIPNLGPSLSSLPSALSLMLPMGIGDRGVMCGLPERNYTLPPPPYPHLESSYFRTILPGILSYLADRPPPQYIHPNSINVDGNTALSITNNPSALDPYQSNGNVGLEPGIVSIDSRSVNTHGAQSLHPSDGHEVALDTAITMENVSRVTSPISTDGMAEELTMDGVAGEHSQIPNGSRSHEPLSVDSVSNNLAADAVGHGGVIPMHGNGLELPVVMETDHIASRVNGMSDSALSDSIHTVAMSTNSVSVALSTSHNLASLESVSLHEVGLSLEPVAVSSITQEVAMGTGHVDVSSDSLSFVSPSLQMEDSNSNKENMATLFTIWCTLCDRAYPSDCPEHGPVTFVPDTPIESRARLSLPKQLVLRQSIVGAEVGVWTGETIPVRTCFGPLIGQQSHSMEVAEWTDKAVNHIWKIYHNGVLEFCIITTDENECNWMMFVRKARNREEQNLVAYPHDGKIFFCTSQDIPPENELLFYYSRDYAQQIGVPEHPDVHLCNCGKECNSYTEFKAHLTSHIHNHLPTQGHSGSHGPSHSKERKWKCSMCPQAFISPSKLHVHFMGHMGMKPHKCDFCSKAFSDPSNLRTHLKIHTGQKNYRCTLCDKSFTQKAHLESHMVIHTGEKNLKCDYCDKLFMRRQDLKQHVLIHTQERQIKCPKCDKLFLRTNHLKKHLNSHEGKRDYVCEKCTKAYLTKYHLTRHLKTCKGPTSSSSAPEEEEEDDSEEEDLADSVGTEDCRINSAVYSADESLSAHK</sequence>
<proteinExistence type="evidence at protein level"/>
<feature type="chain" id="PRO_0000047760" description="PR domain zinc finger protein 4">
    <location>
        <begin position="1"/>
        <end position="801"/>
    </location>
</feature>
<feature type="domain" description="SET" evidence="2">
    <location>
        <begin position="412"/>
        <end position="529"/>
    </location>
</feature>
<feature type="zinc finger region" description="C2H2-type 1; atypical" evidence="1">
    <location>
        <begin position="545"/>
        <end position="566"/>
    </location>
</feature>
<feature type="zinc finger region" description="C2H2-type 2" evidence="1">
    <location>
        <begin position="618"/>
        <end position="640"/>
    </location>
</feature>
<feature type="zinc finger region" description="C2H2-type 3" evidence="1">
    <location>
        <begin position="646"/>
        <end position="668"/>
    </location>
</feature>
<feature type="zinc finger region" description="C2H2-type 4" evidence="1">
    <location>
        <begin position="674"/>
        <end position="696"/>
    </location>
</feature>
<feature type="zinc finger region" description="C2H2-type 5" evidence="1">
    <location>
        <begin position="702"/>
        <end position="724"/>
    </location>
</feature>
<feature type="zinc finger region" description="C2H2-type 6; atypical" evidence="1">
    <location>
        <begin position="730"/>
        <end position="752"/>
    </location>
</feature>
<feature type="region of interest" description="Disordered" evidence="3">
    <location>
        <begin position="751"/>
        <end position="782"/>
    </location>
</feature>
<feature type="compositionally biased region" description="Acidic residues" evidence="3">
    <location>
        <begin position="762"/>
        <end position="776"/>
    </location>
</feature>
<feature type="sequence conflict" description="In Ref. 1; AAD55249." evidence="4" ref="1">
    <original>E</original>
    <variation>A</variation>
    <location>
        <position position="16"/>
    </location>
</feature>
<feature type="sequence conflict" description="In Ref. 1; AAD55249." evidence="4" ref="1">
    <original>H</original>
    <variation>I</variation>
    <location>
        <position position="580"/>
    </location>
</feature>
<feature type="sequence conflict" description="In Ref. 1; AAD55249." evidence="4" ref="1">
    <original>H</original>
    <variation>Y</variation>
    <location>
        <position position="608"/>
    </location>
</feature>
<feature type="sequence conflict" description="In Ref. 1; AAD55249." evidence="4" ref="1">
    <original>ES</original>
    <variation>GV</variation>
    <location>
        <begin position="662"/>
        <end position="663"/>
    </location>
</feature>
<feature type="strand" evidence="5">
    <location>
        <begin position="374"/>
        <end position="377"/>
    </location>
</feature>
<feature type="helix" evidence="5">
    <location>
        <begin position="378"/>
        <end position="380"/>
    </location>
</feature>
<feature type="strand" evidence="5">
    <location>
        <begin position="382"/>
        <end position="388"/>
    </location>
</feature>
<feature type="turn" evidence="5">
    <location>
        <begin position="389"/>
        <end position="391"/>
    </location>
</feature>
<feature type="helix" evidence="6">
    <location>
        <begin position="405"/>
        <end position="408"/>
    </location>
</feature>
<feature type="strand" evidence="6">
    <location>
        <begin position="414"/>
        <end position="418"/>
    </location>
</feature>
<feature type="strand" evidence="6">
    <location>
        <begin position="425"/>
        <end position="431"/>
    </location>
</feature>
<feature type="strand" evidence="6">
    <location>
        <begin position="445"/>
        <end position="447"/>
    </location>
</feature>
<feature type="strand" evidence="6">
    <location>
        <begin position="462"/>
        <end position="468"/>
    </location>
</feature>
<feature type="strand" evidence="6">
    <location>
        <begin position="471"/>
        <end position="477"/>
    </location>
</feature>
<feature type="turn" evidence="6">
    <location>
        <begin position="481"/>
        <end position="483"/>
    </location>
</feature>
<feature type="helix" evidence="6">
    <location>
        <begin position="486"/>
        <end position="489"/>
    </location>
</feature>
<feature type="turn" evidence="6">
    <location>
        <begin position="496"/>
        <end position="498"/>
    </location>
</feature>
<feature type="strand" evidence="6">
    <location>
        <begin position="501"/>
        <end position="506"/>
    </location>
</feature>
<feature type="strand" evidence="6">
    <location>
        <begin position="509"/>
        <end position="516"/>
    </location>
</feature>
<feature type="strand" evidence="6">
    <location>
        <begin position="525"/>
        <end position="528"/>
    </location>
</feature>
<feature type="helix" evidence="6">
    <location>
        <begin position="531"/>
        <end position="536"/>
    </location>
</feature>
<name>PRDM4_HUMAN</name>
<gene>
    <name type="primary">PRDM4</name>
    <name type="synonym">PFM1</name>
</gene>
<comment type="function">
    <text>May function as a transcription factor involved in cell differentiation.</text>
</comment>
<comment type="interaction">
    <interactant intactId="EBI-2803427">
        <id>Q9UKN5</id>
    </interactant>
    <interactant intactId="EBI-748128">
        <id>Q8WYA6</id>
        <label>CTNNBL1</label>
    </interactant>
    <organismsDiffer>false</organismsDiffer>
    <experiments>3</experiments>
</comment>
<comment type="interaction">
    <interactant intactId="EBI-2803427">
        <id>Q9UKN5</id>
    </interactant>
    <interactant intactId="EBI-8634060">
        <id>Q8IXL7</id>
        <label>MSRB3</label>
    </interactant>
    <organismsDiffer>false</organismsDiffer>
    <experiments>3</experiments>
</comment>
<comment type="interaction">
    <interactant intactId="EBI-2803427">
        <id>Q9UKN5</id>
    </interactant>
    <interactant intactId="EBI-746987">
        <id>P62166</id>
        <label>NCS1</label>
    </interactant>
    <organismsDiffer>false</organismsDiffer>
    <experiments>3</experiments>
</comment>
<comment type="subcellular location">
    <subcellularLocation>
        <location evidence="4">Nucleus</location>
    </subcellularLocation>
</comment>
<comment type="tissue specificity">
    <text>Expressed in many tissues. Highly expressed in ovary, testis, pancreas, brain, heart and prostate.</text>
</comment>
<comment type="similarity">
    <text evidence="2">Belongs to the class V-like SAM-binding methyltransferase superfamily.</text>
</comment>
<keyword id="KW-0002">3D-structure</keyword>
<keyword id="KW-0238">DNA-binding</keyword>
<keyword id="KW-0479">Metal-binding</keyword>
<keyword id="KW-0489">Methyltransferase</keyword>
<keyword id="KW-0539">Nucleus</keyword>
<keyword id="KW-1267">Proteomics identification</keyword>
<keyword id="KW-1185">Reference proteome</keyword>
<keyword id="KW-0677">Repeat</keyword>
<keyword id="KW-0949">S-adenosyl-L-methionine</keyword>
<keyword id="KW-0804">Transcription</keyword>
<keyword id="KW-0805">Transcription regulation</keyword>
<keyword id="KW-0808">Transferase</keyword>
<keyword id="KW-0862">Zinc</keyword>
<keyword id="KW-0863">Zinc-finger</keyword>
<organism>
    <name type="scientific">Homo sapiens</name>
    <name type="common">Human</name>
    <dbReference type="NCBI Taxonomy" id="9606"/>
    <lineage>
        <taxon>Eukaryota</taxon>
        <taxon>Metazoa</taxon>
        <taxon>Chordata</taxon>
        <taxon>Craniata</taxon>
        <taxon>Vertebrata</taxon>
        <taxon>Euteleostomi</taxon>
        <taxon>Mammalia</taxon>
        <taxon>Eutheria</taxon>
        <taxon>Euarchontoglires</taxon>
        <taxon>Primates</taxon>
        <taxon>Haplorrhini</taxon>
        <taxon>Catarrhini</taxon>
        <taxon>Hominidae</taxon>
        <taxon>Homo</taxon>
    </lineage>
</organism>
<protein>
    <recommendedName>
        <fullName>PR domain zinc finger protein 4</fullName>
        <ecNumber>2.1.1.-</ecNumber>
    </recommendedName>
    <alternativeName>
        <fullName>PR domain-containing protein 4</fullName>
    </alternativeName>
</protein>
<reference key="1">
    <citation type="journal article" date="1999" name="Genomics">
        <title>PFM1 (PRDM4), a new member of the PR-domain family, maps to a tumor suppressor locus on human chromosome 12q23-q24.1.</title>
        <authorList>
            <person name="Yang X.-H."/>
            <person name="Huang S."/>
        </authorList>
    </citation>
    <scope>NUCLEOTIDE SEQUENCE [MRNA]</scope>
</reference>
<reference key="2">
    <citation type="journal article" date="2004" name="Genome Res.">
        <title>The status, quality, and expansion of the NIH full-length cDNA project: the Mammalian Gene Collection (MGC).</title>
        <authorList>
            <consortium name="The MGC Project Team"/>
        </authorList>
    </citation>
    <scope>NUCLEOTIDE SEQUENCE [LARGE SCALE MRNA]</scope>
    <source>
        <tissue>Testis</tissue>
    </source>
</reference>
<reference key="3">
    <citation type="journal article" date="2007" name="BMC Genomics">
        <title>The full-ORF clone resource of the German cDNA consortium.</title>
        <authorList>
            <person name="Bechtel S."/>
            <person name="Rosenfelder H."/>
            <person name="Duda A."/>
            <person name="Schmidt C.P."/>
            <person name="Ernst U."/>
            <person name="Wellenreuther R."/>
            <person name="Mehrle A."/>
            <person name="Schuster C."/>
            <person name="Bahr A."/>
            <person name="Bloecker H."/>
            <person name="Heubner D."/>
            <person name="Hoerlein A."/>
            <person name="Michel G."/>
            <person name="Wedler H."/>
            <person name="Koehrer K."/>
            <person name="Ottenwaelder B."/>
            <person name="Poustka A."/>
            <person name="Wiemann S."/>
            <person name="Schupp I."/>
        </authorList>
    </citation>
    <scope>NUCLEOTIDE SEQUENCE [LARGE SCALE MRNA] OF 77-801</scope>
    <source>
        <tissue>Testis</tissue>
    </source>
</reference>
<reference key="4">
    <citation type="submission" date="2008-08" db="PDB data bank">
        <title>The crystal structure of methyltransferase domain of human PR domain-containing protein 4.</title>
        <authorList>
            <consortium name="Structural genomics consortium (SGC)"/>
        </authorList>
    </citation>
    <scope>X-RAY CRYSTALLOGRAPHY (2.15 ANGSTROMS) OF 390-540</scope>
</reference>
<accession>Q9UKN5</accession>
<accession>Q9UFA6</accession>
<evidence type="ECO:0000255" key="1">
    <source>
        <dbReference type="PROSITE-ProRule" id="PRU00042"/>
    </source>
</evidence>
<evidence type="ECO:0000255" key="2">
    <source>
        <dbReference type="PROSITE-ProRule" id="PRU00190"/>
    </source>
</evidence>
<evidence type="ECO:0000256" key="3">
    <source>
        <dbReference type="SAM" id="MobiDB-lite"/>
    </source>
</evidence>
<evidence type="ECO:0000305" key="4"/>
<evidence type="ECO:0007829" key="5">
    <source>
        <dbReference type="PDB" id="2L9Z"/>
    </source>
</evidence>
<evidence type="ECO:0007829" key="6">
    <source>
        <dbReference type="PDB" id="3DB5"/>
    </source>
</evidence>
<dbReference type="EC" id="2.1.1.-"/>
<dbReference type="EMBL" id="AF144757">
    <property type="protein sequence ID" value="AAD55249.2"/>
    <property type="molecule type" value="mRNA"/>
</dbReference>
<dbReference type="EMBL" id="BC035581">
    <property type="protein sequence ID" value="AAH35581.1"/>
    <property type="molecule type" value="mRNA"/>
</dbReference>
<dbReference type="EMBL" id="AL133083">
    <property type="protein sequence ID" value="CAB61401.1"/>
    <property type="molecule type" value="mRNA"/>
</dbReference>
<dbReference type="CCDS" id="CCDS9115.1"/>
<dbReference type="PIR" id="T42688">
    <property type="entry name" value="T42688"/>
</dbReference>
<dbReference type="RefSeq" id="NP_036538.3">
    <property type="nucleotide sequence ID" value="NM_012406.3"/>
</dbReference>
<dbReference type="RefSeq" id="XP_054226822.1">
    <property type="nucleotide sequence ID" value="XM_054370847.1"/>
</dbReference>
<dbReference type="PDB" id="2L9Z">
    <property type="method" value="NMR"/>
    <property type="chains" value="A=366-402"/>
</dbReference>
<dbReference type="PDB" id="3DB5">
    <property type="method" value="X-ray"/>
    <property type="resolution" value="2.15 A"/>
    <property type="chains" value="A/B=390-540"/>
</dbReference>
<dbReference type="PDBsum" id="2L9Z"/>
<dbReference type="PDBsum" id="3DB5"/>
<dbReference type="BMRB" id="Q9UKN5"/>
<dbReference type="SMR" id="Q9UKN5"/>
<dbReference type="BioGRID" id="116288">
    <property type="interactions" value="24"/>
</dbReference>
<dbReference type="CORUM" id="Q9UKN5"/>
<dbReference type="FunCoup" id="Q9UKN5">
    <property type="interactions" value="3212"/>
</dbReference>
<dbReference type="IntAct" id="Q9UKN5">
    <property type="interactions" value="19"/>
</dbReference>
<dbReference type="MINT" id="Q9UKN5"/>
<dbReference type="STRING" id="9606.ENSP00000228437"/>
<dbReference type="GlyGen" id="Q9UKN5">
    <property type="glycosylation" value="1 site"/>
</dbReference>
<dbReference type="iPTMnet" id="Q9UKN5"/>
<dbReference type="PhosphoSitePlus" id="Q9UKN5"/>
<dbReference type="BioMuta" id="PRDM4"/>
<dbReference type="DMDM" id="25008960"/>
<dbReference type="jPOST" id="Q9UKN5"/>
<dbReference type="MassIVE" id="Q9UKN5"/>
<dbReference type="PaxDb" id="9606-ENSP00000228437"/>
<dbReference type="PeptideAtlas" id="Q9UKN5"/>
<dbReference type="ProteomicsDB" id="84824"/>
<dbReference type="ABCD" id="Q9UKN5">
    <property type="antibodies" value="1 sequenced antibody"/>
</dbReference>
<dbReference type="Antibodypedia" id="18264">
    <property type="antibodies" value="294 antibodies from 31 providers"/>
</dbReference>
<dbReference type="DNASU" id="11108"/>
<dbReference type="Ensembl" id="ENST00000228437.10">
    <property type="protein sequence ID" value="ENSP00000228437.5"/>
    <property type="gene ID" value="ENSG00000110851.12"/>
</dbReference>
<dbReference type="GeneID" id="11108"/>
<dbReference type="KEGG" id="hsa:11108"/>
<dbReference type="MANE-Select" id="ENST00000228437.10">
    <property type="protein sequence ID" value="ENSP00000228437.5"/>
    <property type="RefSeq nucleotide sequence ID" value="NM_012406.4"/>
    <property type="RefSeq protein sequence ID" value="NP_036538.3"/>
</dbReference>
<dbReference type="UCSC" id="uc001tmp.4">
    <property type="organism name" value="human"/>
</dbReference>
<dbReference type="AGR" id="HGNC:9348"/>
<dbReference type="CTD" id="11108"/>
<dbReference type="DisGeNET" id="11108"/>
<dbReference type="GeneCards" id="PRDM4"/>
<dbReference type="HGNC" id="HGNC:9348">
    <property type="gene designation" value="PRDM4"/>
</dbReference>
<dbReference type="HPA" id="ENSG00000110851">
    <property type="expression patterns" value="Low tissue specificity"/>
</dbReference>
<dbReference type="MIM" id="605780">
    <property type="type" value="gene"/>
</dbReference>
<dbReference type="neXtProt" id="NX_Q9UKN5"/>
<dbReference type="OpenTargets" id="ENSG00000110851"/>
<dbReference type="PharmGKB" id="PA33716"/>
<dbReference type="VEuPathDB" id="HostDB:ENSG00000110851"/>
<dbReference type="eggNOG" id="KOG1721">
    <property type="taxonomic scope" value="Eukaryota"/>
</dbReference>
<dbReference type="eggNOG" id="KOG2461">
    <property type="taxonomic scope" value="Eukaryota"/>
</dbReference>
<dbReference type="GeneTree" id="ENSGT00940000156443"/>
<dbReference type="HOGENOM" id="CLU_019772_0_0_1"/>
<dbReference type="InParanoid" id="Q9UKN5"/>
<dbReference type="OMA" id="QTGPHEL"/>
<dbReference type="OrthoDB" id="654211at2759"/>
<dbReference type="PAN-GO" id="Q9UKN5">
    <property type="GO annotations" value="4 GO annotations based on evolutionary models"/>
</dbReference>
<dbReference type="PhylomeDB" id="Q9UKN5"/>
<dbReference type="TreeFam" id="TF332513"/>
<dbReference type="PathwayCommons" id="Q9UKN5"/>
<dbReference type="Reactome" id="R-HSA-193670">
    <property type="pathway name" value="p75NTR negatively regulates cell cycle via SC1"/>
</dbReference>
<dbReference type="SignaLink" id="Q9UKN5"/>
<dbReference type="BioGRID-ORCS" id="11108">
    <property type="hits" value="17 hits in 1187 CRISPR screens"/>
</dbReference>
<dbReference type="ChiTaRS" id="PRDM4">
    <property type="organism name" value="human"/>
</dbReference>
<dbReference type="EvolutionaryTrace" id="Q9UKN5"/>
<dbReference type="GenomeRNAi" id="11108"/>
<dbReference type="Pharos" id="Q9UKN5">
    <property type="development level" value="Tbio"/>
</dbReference>
<dbReference type="PRO" id="PR:Q9UKN5"/>
<dbReference type="Proteomes" id="UP000005640">
    <property type="component" value="Chromosome 12"/>
</dbReference>
<dbReference type="RNAct" id="Q9UKN5">
    <property type="molecule type" value="protein"/>
</dbReference>
<dbReference type="Bgee" id="ENSG00000110851">
    <property type="expression patterns" value="Expressed in oocyte and 213 other cell types or tissues"/>
</dbReference>
<dbReference type="ExpressionAtlas" id="Q9UKN5">
    <property type="expression patterns" value="baseline and differential"/>
</dbReference>
<dbReference type="GO" id="GO:0035097">
    <property type="term" value="C:histone methyltransferase complex"/>
    <property type="evidence" value="ECO:0000303"/>
    <property type="project" value="ParkinsonsUK-UCL"/>
</dbReference>
<dbReference type="GO" id="GO:0005634">
    <property type="term" value="C:nucleus"/>
    <property type="evidence" value="ECO:0000318"/>
    <property type="project" value="GO_Central"/>
</dbReference>
<dbReference type="GO" id="GO:0001228">
    <property type="term" value="F:DNA-binding transcription activator activity, RNA polymerase II-specific"/>
    <property type="evidence" value="ECO:0000250"/>
    <property type="project" value="ARUK-UCL"/>
</dbReference>
<dbReference type="GO" id="GO:0000981">
    <property type="term" value="F:DNA-binding transcription factor activity, RNA polymerase II-specific"/>
    <property type="evidence" value="ECO:0000318"/>
    <property type="project" value="GO_Central"/>
</dbReference>
<dbReference type="GO" id="GO:1990226">
    <property type="term" value="F:histone methyltransferase binding"/>
    <property type="evidence" value="ECO:0000303"/>
    <property type="project" value="ParkinsonsUK-UCL"/>
</dbReference>
<dbReference type="GO" id="GO:0008168">
    <property type="term" value="F:methyltransferase activity"/>
    <property type="evidence" value="ECO:0007669"/>
    <property type="project" value="UniProtKB-KW"/>
</dbReference>
<dbReference type="GO" id="GO:0000978">
    <property type="term" value="F:RNA polymerase II cis-regulatory region sequence-specific DNA binding"/>
    <property type="evidence" value="ECO:0000250"/>
    <property type="project" value="ARUK-UCL"/>
</dbReference>
<dbReference type="GO" id="GO:1990837">
    <property type="term" value="F:sequence-specific double-stranded DNA binding"/>
    <property type="evidence" value="ECO:0000314"/>
    <property type="project" value="ARUK-UCL"/>
</dbReference>
<dbReference type="GO" id="GO:0008270">
    <property type="term" value="F:zinc ion binding"/>
    <property type="evidence" value="ECO:0007669"/>
    <property type="project" value="UniProtKB-KW"/>
</dbReference>
<dbReference type="GO" id="GO:0032259">
    <property type="term" value="P:methylation"/>
    <property type="evidence" value="ECO:0007669"/>
    <property type="project" value="UniProtKB-KW"/>
</dbReference>
<dbReference type="GO" id="GO:0045944">
    <property type="term" value="P:positive regulation of transcription by RNA polymerase II"/>
    <property type="evidence" value="ECO:0000250"/>
    <property type="project" value="ARUK-UCL"/>
</dbReference>
<dbReference type="GO" id="GO:0010468">
    <property type="term" value="P:regulation of gene expression"/>
    <property type="evidence" value="ECO:0000318"/>
    <property type="project" value="GO_Central"/>
</dbReference>
<dbReference type="GO" id="GO:0006366">
    <property type="term" value="P:transcription by RNA polymerase II"/>
    <property type="evidence" value="ECO:0007669"/>
    <property type="project" value="InterPro"/>
</dbReference>
<dbReference type="CDD" id="cd19189">
    <property type="entry name" value="PR-SET_PRDM4"/>
    <property type="match status" value="1"/>
</dbReference>
<dbReference type="FunFam" id="2.170.270.10:FF:000022">
    <property type="entry name" value="PR domain zinc finger protein 4"/>
    <property type="match status" value="1"/>
</dbReference>
<dbReference type="FunFam" id="3.30.160.60:FF:000436">
    <property type="entry name" value="PR domain zinc finger protein 4"/>
    <property type="match status" value="1"/>
</dbReference>
<dbReference type="FunFam" id="3.30.160.60:FF:000723">
    <property type="entry name" value="PR domain zinc finger protein 4"/>
    <property type="match status" value="1"/>
</dbReference>
<dbReference type="FunFam" id="3.30.160.60:FF:000804">
    <property type="entry name" value="PR domain zinc finger protein 4"/>
    <property type="match status" value="1"/>
</dbReference>
<dbReference type="FunFam" id="3.30.160.60:FF:000840">
    <property type="entry name" value="PR domain zinc finger protein 4"/>
    <property type="match status" value="1"/>
</dbReference>
<dbReference type="FunFam" id="3.30.160.60:FF:000922">
    <property type="entry name" value="PR domain zinc finger protein 4"/>
    <property type="match status" value="1"/>
</dbReference>
<dbReference type="Gene3D" id="3.30.160.60">
    <property type="entry name" value="Classic Zinc Finger"/>
    <property type="match status" value="5"/>
</dbReference>
<dbReference type="Gene3D" id="2.170.270.10">
    <property type="entry name" value="SET domain"/>
    <property type="match status" value="1"/>
</dbReference>
<dbReference type="InterPro" id="IPR017124">
    <property type="entry name" value="PRDM4"/>
</dbReference>
<dbReference type="InterPro" id="IPR044404">
    <property type="entry name" value="PRDM4_PR/SET"/>
</dbReference>
<dbReference type="InterPro" id="IPR041493">
    <property type="entry name" value="PRDM4_Znf"/>
</dbReference>
<dbReference type="InterPro" id="IPR001214">
    <property type="entry name" value="SET_dom"/>
</dbReference>
<dbReference type="InterPro" id="IPR046341">
    <property type="entry name" value="SET_dom_sf"/>
</dbReference>
<dbReference type="InterPro" id="IPR050331">
    <property type="entry name" value="Zinc_finger"/>
</dbReference>
<dbReference type="InterPro" id="IPR036236">
    <property type="entry name" value="Znf_C2H2_sf"/>
</dbReference>
<dbReference type="InterPro" id="IPR013087">
    <property type="entry name" value="Znf_C2H2_type"/>
</dbReference>
<dbReference type="PANTHER" id="PTHR16515">
    <property type="entry name" value="PR DOMAIN ZINC FINGER PROTEIN"/>
    <property type="match status" value="1"/>
</dbReference>
<dbReference type="PANTHER" id="PTHR16515:SF2">
    <property type="entry name" value="PR DOMAIN ZINC FINGER PROTEIN 4"/>
    <property type="match status" value="1"/>
</dbReference>
<dbReference type="Pfam" id="PF21549">
    <property type="entry name" value="PRDM2_PR"/>
    <property type="match status" value="1"/>
</dbReference>
<dbReference type="Pfam" id="PF00096">
    <property type="entry name" value="zf-C2H2"/>
    <property type="match status" value="3"/>
</dbReference>
<dbReference type="Pfam" id="PF18445">
    <property type="entry name" value="Zn_ribbon_PRDM4"/>
    <property type="match status" value="1"/>
</dbReference>
<dbReference type="PIRSF" id="PIRSF037161">
    <property type="entry name" value="PRDM4"/>
    <property type="match status" value="1"/>
</dbReference>
<dbReference type="SMART" id="SM00355">
    <property type="entry name" value="ZnF_C2H2"/>
    <property type="match status" value="7"/>
</dbReference>
<dbReference type="SUPFAM" id="SSF57667">
    <property type="entry name" value="beta-beta-alpha zinc fingers"/>
    <property type="match status" value="3"/>
</dbReference>
<dbReference type="PROSITE" id="PS50280">
    <property type="entry name" value="SET"/>
    <property type="match status" value="1"/>
</dbReference>
<dbReference type="PROSITE" id="PS00028">
    <property type="entry name" value="ZINC_FINGER_C2H2_1"/>
    <property type="match status" value="5"/>
</dbReference>
<dbReference type="PROSITE" id="PS50157">
    <property type="entry name" value="ZINC_FINGER_C2H2_2"/>
    <property type="match status" value="6"/>
</dbReference>